<protein>
    <recommendedName>
        <fullName>D(1B) dopamine receptor</fullName>
    </recommendedName>
    <alternativeName>
        <fullName>D(5) dopamine receptor</fullName>
    </alternativeName>
    <alternativeName>
        <fullName>D1beta dopamine receptor</fullName>
    </alternativeName>
    <alternativeName>
        <fullName>Dopamine D5 receptor</fullName>
    </alternativeName>
</protein>
<organism>
    <name type="scientific">Homo sapiens</name>
    <name type="common">Human</name>
    <dbReference type="NCBI Taxonomy" id="9606"/>
    <lineage>
        <taxon>Eukaryota</taxon>
        <taxon>Metazoa</taxon>
        <taxon>Chordata</taxon>
        <taxon>Craniata</taxon>
        <taxon>Vertebrata</taxon>
        <taxon>Euteleostomi</taxon>
        <taxon>Mammalia</taxon>
        <taxon>Eutheria</taxon>
        <taxon>Euarchontoglires</taxon>
        <taxon>Primates</taxon>
        <taxon>Haplorrhini</taxon>
        <taxon>Catarrhini</taxon>
        <taxon>Hominidae</taxon>
        <taxon>Homo</taxon>
    </lineage>
</organism>
<feature type="chain" id="PRO_0000069405" description="D(1B) dopamine receptor">
    <location>
        <begin position="1"/>
        <end position="477"/>
    </location>
</feature>
<feature type="topological domain" description="Extracellular" evidence="2">
    <location>
        <begin position="1"/>
        <end position="39"/>
    </location>
</feature>
<feature type="transmembrane region" description="Helical; Name=1" evidence="2">
    <location>
        <begin position="40"/>
        <end position="66"/>
    </location>
</feature>
<feature type="topological domain" description="Cytoplasmic" evidence="2">
    <location>
        <begin position="67"/>
        <end position="77"/>
    </location>
</feature>
<feature type="transmembrane region" description="Helical; Name=2" evidence="2">
    <location>
        <begin position="78"/>
        <end position="104"/>
    </location>
</feature>
<feature type="topological domain" description="Extracellular" evidence="2">
    <location>
        <begin position="105"/>
        <end position="114"/>
    </location>
</feature>
<feature type="transmembrane region" description="Helical; Name=3" evidence="2">
    <location>
        <begin position="115"/>
        <end position="136"/>
    </location>
</feature>
<feature type="topological domain" description="Cytoplasmic" evidence="2">
    <location>
        <begin position="137"/>
        <end position="158"/>
    </location>
</feature>
<feature type="transmembrane region" description="Helical; Name=4" evidence="2">
    <location>
        <begin position="159"/>
        <end position="180"/>
    </location>
</feature>
<feature type="topological domain" description="Extracellular" evidence="2">
    <location>
        <begin position="181"/>
        <end position="223"/>
    </location>
</feature>
<feature type="transmembrane region" description="Helical; Name=5" evidence="2">
    <location>
        <begin position="224"/>
        <end position="246"/>
    </location>
</feature>
<feature type="topological domain" description="Cytoplasmic" evidence="2">
    <location>
        <begin position="247"/>
        <end position="296"/>
    </location>
</feature>
<feature type="transmembrane region" description="Helical; Name=6" evidence="2">
    <location>
        <begin position="297"/>
        <end position="320"/>
    </location>
</feature>
<feature type="topological domain" description="Extracellular" evidence="2">
    <location>
        <begin position="321"/>
        <end position="340"/>
    </location>
</feature>
<feature type="transmembrane region" description="Helical; Name=7" evidence="2">
    <location>
        <begin position="341"/>
        <end position="360"/>
    </location>
</feature>
<feature type="topological domain" description="Cytoplasmic" evidence="2">
    <location>
        <begin position="361"/>
        <end position="477"/>
    </location>
</feature>
<feature type="lipid moiety-binding region" description="S-palmitoyl cysteine" evidence="1">
    <location>
        <position position="375"/>
    </location>
</feature>
<feature type="glycosylation site" description="N-linked (GlcNAc...) asparagine" evidence="5">
    <location>
        <position position="7"/>
    </location>
</feature>
<feature type="glycosylation site" description="N-linked (GlcNAc...) asparagine" evidence="2">
    <location>
        <position position="222"/>
    </location>
</feature>
<feature type="disulfide bond" evidence="3">
    <location>
        <begin position="113"/>
        <end position="217"/>
    </location>
</feature>
<feature type="sequence variant" id="VAR_029210" description="In dbSNP:rs2227840.">
    <original>C</original>
    <variation>S</variation>
    <location>
        <position position="62"/>
    </location>
</feature>
<feature type="sequence variant" id="VAR_011837" description="In dbSNP:rs6282." evidence="4">
    <original>L</original>
    <variation>R</variation>
    <location>
        <position position="88"/>
    </location>
</feature>
<feature type="sequence variant" id="VAR_029211" description="In dbSNP:rs2227849.">
    <original>G</original>
    <variation>E</variation>
    <location>
        <position position="110"/>
    </location>
</feature>
<feature type="sequence variant" id="VAR_029212" description="In dbSNP:rs2227845.">
    <original>F</original>
    <variation>V</variation>
    <location>
        <position position="207"/>
    </location>
</feature>
<feature type="sequence variant" id="VAR_029213" description="In dbSNP:rs2227843.">
    <original>S</original>
    <variation>N</variation>
    <location>
        <position position="233"/>
    </location>
</feature>
<feature type="sequence variant" id="VAR_024254" description="In dbSNP:rs2227852.">
    <original>V</original>
    <variation>I</variation>
    <location>
        <position position="238"/>
    </location>
</feature>
<feature type="sequence variant" id="VAR_003458" description="In dbSNP:rs538877978." evidence="8">
    <original>A</original>
    <variation>V</variation>
    <location>
        <position position="269"/>
    </location>
</feature>
<feature type="sequence variant" id="VAR_029215" description="In dbSNP:rs2227850.">
    <original>A</original>
    <variation>V</variation>
    <location>
        <position position="286"/>
    </location>
</feature>
<feature type="sequence variant" id="VAR_061217" description="In dbSNP:rs2227851.">
    <original>T</original>
    <variation>P</variation>
    <location>
        <position position="297"/>
    </location>
</feature>
<feature type="sequence variant" id="VAR_003459" description="In dbSNP:rs1800762." evidence="8">
    <original>P</original>
    <variation>Q</variation>
    <location>
        <position position="330"/>
    </location>
</feature>
<feature type="sequence variant" id="VAR_003460" description="In dbSNP:rs1577263526." evidence="8">
    <original>N</original>
    <variation>D</variation>
    <location>
        <position position="351"/>
    </location>
</feature>
<feature type="sequence variant" id="VAR_003461" description="In dbSNP:rs776114395." evidence="8">
    <original>S</original>
    <variation>C</variation>
    <location>
        <position position="453"/>
    </location>
</feature>
<feature type="mutagenesis site" description="Impairs subcellular location." evidence="5">
    <original>N</original>
    <variation>Q</variation>
    <location>
        <position position="7"/>
    </location>
</feature>
<feature type="helix" evidence="9">
    <location>
        <begin position="38"/>
        <end position="67"/>
    </location>
</feature>
<feature type="helix" evidence="9">
    <location>
        <begin position="69"/>
        <end position="73"/>
    </location>
</feature>
<feature type="helix" evidence="9">
    <location>
        <begin position="76"/>
        <end position="93"/>
    </location>
</feature>
<feature type="helix" evidence="9">
    <location>
        <begin position="95"/>
        <end position="104"/>
    </location>
</feature>
<feature type="helix" evidence="9">
    <location>
        <begin position="110"/>
        <end position="143"/>
    </location>
</feature>
<feature type="helix" evidence="9">
    <location>
        <begin position="145"/>
        <end position="151"/>
    </location>
</feature>
<feature type="helix" evidence="9">
    <location>
        <begin position="154"/>
        <end position="177"/>
    </location>
</feature>
<feature type="helix" evidence="9">
    <location>
        <begin position="223"/>
        <end position="233"/>
    </location>
</feature>
<feature type="helix" evidence="9">
    <location>
        <begin position="235"/>
        <end position="270"/>
    </location>
</feature>
<feature type="helix" evidence="9">
    <location>
        <begin position="291"/>
        <end position="322"/>
    </location>
</feature>
<feature type="helix" evidence="9">
    <location>
        <begin position="338"/>
        <end position="360"/>
    </location>
</feature>
<feature type="helix" evidence="9">
    <location>
        <begin position="363"/>
        <end position="373"/>
    </location>
</feature>
<name>DRD5_HUMAN</name>
<gene>
    <name type="primary">DRD5</name>
    <name type="synonym">DRD1B</name>
    <name type="synonym">DRD1L2</name>
</gene>
<proteinExistence type="evidence at protein level"/>
<dbReference type="EMBL" id="X58454">
    <property type="protein sequence ID" value="CAA41360.1"/>
    <property type="molecule type" value="Genomic_DNA"/>
</dbReference>
<dbReference type="EMBL" id="M67439">
    <property type="protein sequence ID" value="AAA52329.1"/>
    <property type="molecule type" value="Genomic_DNA"/>
</dbReference>
<dbReference type="EMBL" id="AY136750">
    <property type="protein sequence ID" value="AAN01276.1"/>
    <property type="molecule type" value="mRNA"/>
</dbReference>
<dbReference type="EMBL" id="AK313897">
    <property type="protein sequence ID" value="BAG36620.1"/>
    <property type="molecule type" value="mRNA"/>
</dbReference>
<dbReference type="EMBL" id="CH471069">
    <property type="protein sequence ID" value="EAW92679.1"/>
    <property type="molecule type" value="Genomic_DNA"/>
</dbReference>
<dbReference type="EMBL" id="BC009748">
    <property type="protein sequence ID" value="AAH09748.1"/>
    <property type="molecule type" value="mRNA"/>
</dbReference>
<dbReference type="CCDS" id="CCDS3405.1"/>
<dbReference type="PIR" id="S15080">
    <property type="entry name" value="DYHUD5"/>
</dbReference>
<dbReference type="RefSeq" id="NP_000789.1">
    <property type="nucleotide sequence ID" value="NM_000798.5"/>
</dbReference>
<dbReference type="PDB" id="8IRV">
    <property type="method" value="EM"/>
    <property type="resolution" value="3.10 A"/>
    <property type="chains" value="R=1-477"/>
</dbReference>
<dbReference type="PDBsum" id="8IRV"/>
<dbReference type="EMDB" id="EMD-35687"/>
<dbReference type="SMR" id="P21918"/>
<dbReference type="BioGRID" id="108150">
    <property type="interactions" value="9"/>
</dbReference>
<dbReference type="CORUM" id="P21918"/>
<dbReference type="FunCoup" id="P21918">
    <property type="interactions" value="1156"/>
</dbReference>
<dbReference type="IntAct" id="P21918">
    <property type="interactions" value="1"/>
</dbReference>
<dbReference type="STRING" id="9606.ENSP00000306129"/>
<dbReference type="BindingDB" id="P21918"/>
<dbReference type="ChEMBL" id="CHEMBL1850"/>
<dbReference type="DrugBank" id="DB00714">
    <property type="generic name" value="Apomorphine"/>
</dbReference>
<dbReference type="DrugBank" id="DB01238">
    <property type="generic name" value="Aripiprazole"/>
</dbReference>
<dbReference type="DrugBank" id="DB14185">
    <property type="generic name" value="Aripiprazole lauroxil"/>
</dbReference>
<dbReference type="DrugBank" id="DB01200">
    <property type="generic name" value="Bromocriptine"/>
</dbReference>
<dbReference type="DrugBank" id="DB00248">
    <property type="generic name" value="Cabergoline"/>
</dbReference>
<dbReference type="DrugBank" id="DB01038">
    <property type="generic name" value="Carphenazine"/>
</dbReference>
<dbReference type="DrugBank" id="DB00477">
    <property type="generic name" value="Chlorpromazine"/>
</dbReference>
<dbReference type="DrugBank" id="DB00568">
    <property type="generic name" value="Cinnarizine"/>
</dbReference>
<dbReference type="DrugBank" id="DB00363">
    <property type="generic name" value="Clozapine"/>
</dbReference>
<dbReference type="DrugBank" id="DB11274">
    <property type="generic name" value="Dihydro-alpha-ergocryptine"/>
</dbReference>
<dbReference type="DrugBank" id="DB13345">
    <property type="generic name" value="Dihydroergocristine"/>
</dbReference>
<dbReference type="DrugBank" id="DB00988">
    <property type="generic name" value="Dopamine"/>
</dbReference>
<dbReference type="DrugBank" id="DB11275">
    <property type="generic name" value="Epicriptine"/>
</dbReference>
<dbReference type="DrugBank" id="DB01049">
    <property type="generic name" value="Ergoloid mesylate"/>
</dbReference>
<dbReference type="DrugBank" id="DB00696">
    <property type="generic name" value="Ergotamine"/>
</dbReference>
<dbReference type="DrugBank" id="DB00800">
    <property type="generic name" value="Fenoldopam"/>
</dbReference>
<dbReference type="DrugBank" id="DB04946">
    <property type="generic name" value="Iloperidone"/>
</dbReference>
<dbReference type="DrugBank" id="DB00458">
    <property type="generic name" value="Imipramine"/>
</dbReference>
<dbReference type="DrugBank" id="DB00555">
    <property type="generic name" value="Lamotrigine"/>
</dbReference>
<dbReference type="DrugBank" id="DB01235">
    <property type="generic name" value="Levodopa"/>
</dbReference>
<dbReference type="DrugBank" id="DB00589">
    <property type="generic name" value="Lisuride"/>
</dbReference>
<dbReference type="DrugBank" id="DB00408">
    <property type="generic name" value="Loxapine"/>
</dbReference>
<dbReference type="DrugBank" id="DB01403">
    <property type="generic name" value="Methotrimeprazine"/>
</dbReference>
<dbReference type="DrugBank" id="DB06148">
    <property type="generic name" value="Mianserin"/>
</dbReference>
<dbReference type="DrugBank" id="DB08804">
    <property type="generic name" value="Nandrolone decanoate"/>
</dbReference>
<dbReference type="DrugBank" id="DB00334">
    <property type="generic name" value="Olanzapine"/>
</dbReference>
<dbReference type="DrugBank" id="DB00715">
    <property type="generic name" value="Paroxetine"/>
</dbReference>
<dbReference type="DrugBank" id="DB01186">
    <property type="generic name" value="Pergolide"/>
</dbReference>
<dbReference type="DrugBank" id="DB11160">
    <property type="generic name" value="Phenyltoloxamine"/>
</dbReference>
<dbReference type="DrugBank" id="DB11584">
    <property type="generic name" value="Pipradrol"/>
</dbReference>
<dbReference type="DrugBank" id="DB01224">
    <property type="generic name" value="Quetiapine"/>
</dbReference>
<dbReference type="DrugBank" id="DB09097">
    <property type="generic name" value="Quinagolide"/>
</dbReference>
<dbReference type="DrugBank" id="DB05271">
    <property type="generic name" value="Rotigotine"/>
</dbReference>
<dbReference type="DrugBank" id="DB00726">
    <property type="generic name" value="Trimipramine"/>
</dbReference>
<dbReference type="DrugBank" id="DB00246">
    <property type="generic name" value="Ziprasidone"/>
</dbReference>
<dbReference type="DrugBank" id="DB09225">
    <property type="generic name" value="Zotepine"/>
</dbReference>
<dbReference type="DrugBank" id="DB01624">
    <property type="generic name" value="Zuclopenthixol"/>
</dbReference>
<dbReference type="DrugCentral" id="P21918"/>
<dbReference type="GuidetoPHARMACOLOGY" id="218"/>
<dbReference type="GlyCosmos" id="P21918">
    <property type="glycosylation" value="2 sites, No reported glycans"/>
</dbReference>
<dbReference type="GlyGen" id="P21918">
    <property type="glycosylation" value="3 sites"/>
</dbReference>
<dbReference type="iPTMnet" id="P21918"/>
<dbReference type="PhosphoSitePlus" id="P21918"/>
<dbReference type="BioMuta" id="DRD5"/>
<dbReference type="DMDM" id="118214"/>
<dbReference type="MassIVE" id="P21918"/>
<dbReference type="PaxDb" id="9606-ENSP00000306129"/>
<dbReference type="PeptideAtlas" id="P21918"/>
<dbReference type="Antibodypedia" id="9652">
    <property type="antibodies" value="422 antibodies from 39 providers"/>
</dbReference>
<dbReference type="DNASU" id="1816"/>
<dbReference type="Ensembl" id="ENST00000304374.4">
    <property type="protein sequence ID" value="ENSP00000306129.2"/>
    <property type="gene ID" value="ENSG00000169676.6"/>
</dbReference>
<dbReference type="GeneID" id="1816"/>
<dbReference type="KEGG" id="hsa:1816"/>
<dbReference type="MANE-Select" id="ENST00000304374.4">
    <property type="protein sequence ID" value="ENSP00000306129.2"/>
    <property type="RefSeq nucleotide sequence ID" value="NM_000798.5"/>
    <property type="RefSeq protein sequence ID" value="NP_000789.1"/>
</dbReference>
<dbReference type="UCSC" id="uc003gmb.5">
    <property type="organism name" value="human"/>
</dbReference>
<dbReference type="AGR" id="HGNC:3026"/>
<dbReference type="CTD" id="1816"/>
<dbReference type="DisGeNET" id="1816"/>
<dbReference type="GeneCards" id="DRD5"/>
<dbReference type="HGNC" id="HGNC:3026">
    <property type="gene designation" value="DRD5"/>
</dbReference>
<dbReference type="HPA" id="ENSG00000169676">
    <property type="expression patterns" value="Group enriched (brain, lymphoid tissue, stomach)"/>
</dbReference>
<dbReference type="MalaCards" id="DRD5"/>
<dbReference type="MIM" id="126453">
    <property type="type" value="gene"/>
</dbReference>
<dbReference type="MIM" id="606798">
    <property type="type" value="phenotype"/>
</dbReference>
<dbReference type="neXtProt" id="NX_P21918"/>
<dbReference type="OpenTargets" id="ENSG00000169676"/>
<dbReference type="PharmGKB" id="PA148"/>
<dbReference type="VEuPathDB" id="HostDB:ENSG00000169676"/>
<dbReference type="eggNOG" id="KOG3656">
    <property type="taxonomic scope" value="Eukaryota"/>
</dbReference>
<dbReference type="GeneTree" id="ENSGT00940000157037"/>
<dbReference type="HOGENOM" id="CLU_009579_11_0_1"/>
<dbReference type="InParanoid" id="P21918"/>
<dbReference type="OMA" id="IMVCSAV"/>
<dbReference type="OrthoDB" id="6021915at2759"/>
<dbReference type="PAN-GO" id="P21918">
    <property type="GO annotations" value="5 GO annotations based on evolutionary models"/>
</dbReference>
<dbReference type="PhylomeDB" id="P21918"/>
<dbReference type="TreeFam" id="TF325181"/>
<dbReference type="PathwayCommons" id="P21918"/>
<dbReference type="Reactome" id="R-HSA-390651">
    <property type="pathway name" value="Dopamine receptors"/>
</dbReference>
<dbReference type="Reactome" id="R-HSA-418555">
    <property type="pathway name" value="G alpha (s) signalling events"/>
</dbReference>
<dbReference type="SignaLink" id="P21918"/>
<dbReference type="SIGNOR" id="P21918"/>
<dbReference type="BioGRID-ORCS" id="1816">
    <property type="hits" value="180 hits in 1152 CRISPR screens"/>
</dbReference>
<dbReference type="GeneWiki" id="Dopamine_receptor_D5"/>
<dbReference type="GenomeRNAi" id="1816"/>
<dbReference type="Pharos" id="P21918">
    <property type="development level" value="Tchem"/>
</dbReference>
<dbReference type="PRO" id="PR:P21918"/>
<dbReference type="Proteomes" id="UP000005640">
    <property type="component" value="Chromosome 4"/>
</dbReference>
<dbReference type="RNAct" id="P21918">
    <property type="molecule type" value="protein"/>
</dbReference>
<dbReference type="Bgee" id="ENSG00000169676">
    <property type="expression patterns" value="Expressed in pancreatic ductal cell and 43 other cell types or tissues"/>
</dbReference>
<dbReference type="GO" id="GO:0031526">
    <property type="term" value="C:brush border membrane"/>
    <property type="evidence" value="ECO:0007669"/>
    <property type="project" value="Ensembl"/>
</dbReference>
<dbReference type="GO" id="GO:0060170">
    <property type="term" value="C:ciliary membrane"/>
    <property type="evidence" value="ECO:0000314"/>
    <property type="project" value="SYSCILIA_CCNET"/>
</dbReference>
<dbReference type="GO" id="GO:0005929">
    <property type="term" value="C:cilium"/>
    <property type="evidence" value="ECO:0000314"/>
    <property type="project" value="MGI"/>
</dbReference>
<dbReference type="GO" id="GO:0097730">
    <property type="term" value="C:non-motile cilium"/>
    <property type="evidence" value="ECO:0000314"/>
    <property type="project" value="SYSCILIA_CCNET"/>
</dbReference>
<dbReference type="GO" id="GO:0005886">
    <property type="term" value="C:plasma membrane"/>
    <property type="evidence" value="ECO:0000314"/>
    <property type="project" value="UniProtKB"/>
</dbReference>
<dbReference type="GO" id="GO:0045202">
    <property type="term" value="C:synapse"/>
    <property type="evidence" value="ECO:0007669"/>
    <property type="project" value="GOC"/>
</dbReference>
<dbReference type="GO" id="GO:0035240">
    <property type="term" value="F:dopamine binding"/>
    <property type="evidence" value="ECO:0000314"/>
    <property type="project" value="UniProtKB"/>
</dbReference>
<dbReference type="GO" id="GO:0004952">
    <property type="term" value="F:dopamine neurotransmitter receptor activity"/>
    <property type="evidence" value="ECO:0000314"/>
    <property type="project" value="UniProtKB"/>
</dbReference>
<dbReference type="GO" id="GO:0001588">
    <property type="term" value="F:dopamine neurotransmitter receptor activity, coupled via Gs"/>
    <property type="evidence" value="ECO:0000318"/>
    <property type="project" value="GO_Central"/>
</dbReference>
<dbReference type="GO" id="GO:0004930">
    <property type="term" value="F:G protein-coupled receptor activity"/>
    <property type="evidence" value="ECO:0000318"/>
    <property type="project" value="GO_Central"/>
</dbReference>
<dbReference type="GO" id="GO:0007190">
    <property type="term" value="P:activation of adenylate cyclase activity"/>
    <property type="evidence" value="ECO:0000304"/>
    <property type="project" value="BHF-UCL"/>
</dbReference>
<dbReference type="GO" id="GO:0071880">
    <property type="term" value="P:adenylate cyclase-activating adrenergic receptor signaling pathway"/>
    <property type="evidence" value="ECO:0000318"/>
    <property type="project" value="GO_Central"/>
</dbReference>
<dbReference type="GO" id="GO:0007191">
    <property type="term" value="P:adenylate cyclase-activating dopamine receptor signaling pathway"/>
    <property type="evidence" value="ECO:0000314"/>
    <property type="project" value="UniProtKB"/>
</dbReference>
<dbReference type="GO" id="GO:0007189">
    <property type="term" value="P:adenylate cyclase-activating G protein-coupled receptor signaling pathway"/>
    <property type="evidence" value="ECO:0000314"/>
    <property type="project" value="UniProtKB"/>
</dbReference>
<dbReference type="GO" id="GO:0008306">
    <property type="term" value="P:associative learning"/>
    <property type="evidence" value="ECO:0007669"/>
    <property type="project" value="Ensembl"/>
</dbReference>
<dbReference type="GO" id="GO:0071870">
    <property type="term" value="P:cellular response to catecholamine stimulus"/>
    <property type="evidence" value="ECO:0000314"/>
    <property type="project" value="BHF-UCL"/>
</dbReference>
<dbReference type="GO" id="GO:0007268">
    <property type="term" value="P:chemical synaptic transmission"/>
    <property type="evidence" value="ECO:0000303"/>
    <property type="project" value="UniProtKB"/>
</dbReference>
<dbReference type="GO" id="GO:0007212">
    <property type="term" value="P:G protein-coupled dopamine receptor signaling pathway"/>
    <property type="evidence" value="ECO:0000318"/>
    <property type="project" value="GO_Central"/>
</dbReference>
<dbReference type="GO" id="GO:0006874">
    <property type="term" value="P:intracellular calcium ion homeostasis"/>
    <property type="evidence" value="ECO:0000304"/>
    <property type="project" value="BHF-UCL"/>
</dbReference>
<dbReference type="GO" id="GO:0060292">
    <property type="term" value="P:long-term synaptic depression"/>
    <property type="evidence" value="ECO:0007669"/>
    <property type="project" value="Ensembl"/>
</dbReference>
<dbReference type="GO" id="GO:0045776">
    <property type="term" value="P:negative regulation of blood pressure"/>
    <property type="evidence" value="ECO:0007669"/>
    <property type="project" value="Ensembl"/>
</dbReference>
<dbReference type="GO" id="GO:0033861">
    <property type="term" value="P:negative regulation of NAD(P)H oxidase activity"/>
    <property type="evidence" value="ECO:0000314"/>
    <property type="project" value="UniProtKB"/>
</dbReference>
<dbReference type="GO" id="GO:0001994">
    <property type="term" value="P:norepinephrine-epinephrine vasoconstriction involved in regulation of systemic arterial blood pressure"/>
    <property type="evidence" value="ECO:0007669"/>
    <property type="project" value="Ensembl"/>
</dbReference>
<dbReference type="GO" id="GO:0060158">
    <property type="term" value="P:phospholipase C-activating dopamine receptor signaling pathway"/>
    <property type="evidence" value="ECO:0000304"/>
    <property type="project" value="BHF-UCL"/>
</dbReference>
<dbReference type="GO" id="GO:0045762">
    <property type="term" value="P:positive regulation of adenylate cyclase activity"/>
    <property type="evidence" value="ECO:0000303"/>
    <property type="project" value="UniProtKB"/>
</dbReference>
<dbReference type="GO" id="GO:0043410">
    <property type="term" value="P:positive regulation of MAPK cascade"/>
    <property type="evidence" value="ECO:0000318"/>
    <property type="project" value="GO_Central"/>
</dbReference>
<dbReference type="GO" id="GO:0072593">
    <property type="term" value="P:reactive oxygen species metabolic process"/>
    <property type="evidence" value="ECO:0000314"/>
    <property type="project" value="UniProtKB"/>
</dbReference>
<dbReference type="GO" id="GO:0045924">
    <property type="term" value="P:regulation of female receptivity"/>
    <property type="evidence" value="ECO:0007669"/>
    <property type="project" value="Ensembl"/>
</dbReference>
<dbReference type="GO" id="GO:0001992">
    <property type="term" value="P:regulation of systemic arterial blood pressure by vasopressin"/>
    <property type="evidence" value="ECO:0007669"/>
    <property type="project" value="Ensembl"/>
</dbReference>
<dbReference type="GO" id="GO:0001975">
    <property type="term" value="P:response to amphetamine"/>
    <property type="evidence" value="ECO:0007669"/>
    <property type="project" value="Ensembl"/>
</dbReference>
<dbReference type="GO" id="GO:0042220">
    <property type="term" value="P:response to cocaine"/>
    <property type="evidence" value="ECO:0007669"/>
    <property type="project" value="Ensembl"/>
</dbReference>
<dbReference type="GO" id="GO:0046960">
    <property type="term" value="P:sensitization"/>
    <property type="evidence" value="ECO:0007669"/>
    <property type="project" value="Ensembl"/>
</dbReference>
<dbReference type="GO" id="GO:0001963">
    <property type="term" value="P:synaptic transmission, dopaminergic"/>
    <property type="evidence" value="ECO:0000303"/>
    <property type="project" value="UniProtKB"/>
</dbReference>
<dbReference type="GO" id="GO:0019226">
    <property type="term" value="P:transmission of nerve impulse"/>
    <property type="evidence" value="ECO:0007669"/>
    <property type="project" value="Ensembl"/>
</dbReference>
<dbReference type="GO" id="GO:0042060">
    <property type="term" value="P:wound healing"/>
    <property type="evidence" value="ECO:0007669"/>
    <property type="project" value="Ensembl"/>
</dbReference>
<dbReference type="FunFam" id="1.20.1070.10:FF:000045">
    <property type="entry name" value="D(1A) dopamine receptor"/>
    <property type="match status" value="1"/>
</dbReference>
<dbReference type="Gene3D" id="1.20.1070.10">
    <property type="entry name" value="Rhodopsin 7-helix transmembrane proteins"/>
    <property type="match status" value="1"/>
</dbReference>
<dbReference type="InterPro" id="IPR000497">
    <property type="entry name" value="Dopamine_D5_rcpt"/>
</dbReference>
<dbReference type="InterPro" id="IPR000929">
    <property type="entry name" value="Dopamine_rcpt"/>
</dbReference>
<dbReference type="InterPro" id="IPR000276">
    <property type="entry name" value="GPCR_Rhodpsn"/>
</dbReference>
<dbReference type="InterPro" id="IPR017452">
    <property type="entry name" value="GPCR_Rhodpsn_7TM"/>
</dbReference>
<dbReference type="PANTHER" id="PTHR24248">
    <property type="entry name" value="ADRENERGIC RECEPTOR-RELATED G-PROTEIN COUPLED RECEPTOR"/>
    <property type="match status" value="1"/>
</dbReference>
<dbReference type="PANTHER" id="PTHR24248:SF136">
    <property type="entry name" value="D(1B) DOPAMINE RECEPTOR"/>
    <property type="match status" value="1"/>
</dbReference>
<dbReference type="Pfam" id="PF00001">
    <property type="entry name" value="7tm_1"/>
    <property type="match status" value="1"/>
</dbReference>
<dbReference type="PRINTS" id="PR00566">
    <property type="entry name" value="DOPAMINED1BR"/>
</dbReference>
<dbReference type="PRINTS" id="PR00242">
    <property type="entry name" value="DOPAMINER"/>
</dbReference>
<dbReference type="PRINTS" id="PR00237">
    <property type="entry name" value="GPCRRHODOPSN"/>
</dbReference>
<dbReference type="SMART" id="SM01381">
    <property type="entry name" value="7TM_GPCR_Srsx"/>
    <property type="match status" value="1"/>
</dbReference>
<dbReference type="SUPFAM" id="SSF81321">
    <property type="entry name" value="Family A G protein-coupled receptor-like"/>
    <property type="match status" value="1"/>
</dbReference>
<dbReference type="PROSITE" id="PS00237">
    <property type="entry name" value="G_PROTEIN_RECEP_F1_1"/>
    <property type="match status" value="1"/>
</dbReference>
<dbReference type="PROSITE" id="PS50262">
    <property type="entry name" value="G_PROTEIN_RECEP_F1_2"/>
    <property type="match status" value="1"/>
</dbReference>
<comment type="function">
    <text evidence="7">Dopamine receptor whose activity is mediated by G proteins which activate adenylyl cyclase.</text>
</comment>
<comment type="interaction">
    <interactant intactId="EBI-12139313">
        <id>P21918</id>
    </interactant>
    <interactant intactId="EBI-22310682">
        <id>P0DPK4</id>
        <label>NOTCH2NLC</label>
    </interactant>
    <organismsDiffer>false</organismsDiffer>
    <experiments>3</experiments>
</comment>
<comment type="subcellular location">
    <subcellularLocation>
        <location>Cell membrane</location>
        <topology>Multi-pass membrane protein</topology>
    </subcellularLocation>
</comment>
<comment type="tissue specificity">
    <text evidence="7">Neuron-specific, localized primarily within limbic regions of the brain.</text>
</comment>
<comment type="disease" evidence="6">
    <disease id="DI-00180">
        <name>Benign essential blepharospasm</name>
        <acronym>BEB</acronym>
        <description>A primary focal dystonia affecting the orbicularis oculi muscles. Dystonia is defined by the presence of sustained involuntary muscle contraction, often leading to abnormal postures. BEB usually begins in middle age. Initial symptoms include eye irritation and frequent blinking, progressing to involuntary spasms of eyelid closure. Patients have normal eyes. The visual disturbance is due solely to the forced closure of the eyelids. In severe cases, this can lead to functional blindness.</description>
        <dbReference type="MIM" id="606798"/>
    </disease>
    <text>Disease susceptibility may be associated with variants affecting the gene represented in this entry.</text>
</comment>
<comment type="similarity">
    <text evidence="3">Belongs to the G-protein coupled receptor 1 family.</text>
</comment>
<sequence length="477" mass="52951">MLPPGSNGTAYPGQFALYQQLAQGNAVGGSAGAPPLGPSQVVTACLLTLLIIWTLLGNVLVCAAIVRSRHLRANMTNVFIVSLAVSDLFVALLVMPWKAVAEVAGYWPFGAFCDVWVAFDIMCSTASILNLCVISVDRYWAISRPFRYKRKMTQRMALVMVGLAWTLSILISFIPVQLNWHRDQAASWGGLDLPNNLANWTPWEEDFWEPDVNAENCDSSLNRTYAISSSLISFYIPVAIMIVTYTRIYRIAQVQIRRISSLERAAEHAQSCRSSAACAPDTSLRASIKKETKVLKTLSVIMGVFVCCWLPFFILNCMVPFCSGHPEGPPAGFPCVSETTFDVFVWFGWANSSLNPVIYAFNADFQKVFAQLLGCSHFCSRTPVETVNISNELISYNQDIVFHKEIAAAYIHMMPNAVTPGNREVDNDEEEGPFDRMFQIYQTSPDGDPVAESVWELDCEGEISLDKITPFTPNGFH</sequence>
<evidence type="ECO:0000250" key="1"/>
<evidence type="ECO:0000255" key="2"/>
<evidence type="ECO:0000255" key="3">
    <source>
        <dbReference type="PROSITE-ProRule" id="PRU00521"/>
    </source>
</evidence>
<evidence type="ECO:0000269" key="4">
    <source>
    </source>
</evidence>
<evidence type="ECO:0000269" key="5">
    <source>
    </source>
</evidence>
<evidence type="ECO:0000269" key="6">
    <source>
    </source>
</evidence>
<evidence type="ECO:0000269" key="7">
    <source>
    </source>
</evidence>
<evidence type="ECO:0000269" key="8">
    <source>
    </source>
</evidence>
<evidence type="ECO:0007829" key="9">
    <source>
        <dbReference type="PDB" id="8IRV"/>
    </source>
</evidence>
<reference key="1">
    <citation type="journal article" date="1991" name="Nature">
        <title>Cloning of the gene for a human dopamine D5 receptor with higher affinity for dopamine than D1.</title>
        <authorList>
            <person name="Sunahara R.K."/>
            <person name="Guan H.-C."/>
            <person name="O'Dowd B.F."/>
            <person name="Seeman P."/>
            <person name="Laurier L.G."/>
            <person name="Ng G."/>
            <person name="George S.R."/>
            <person name="Torchia J."/>
            <person name="van Tol H.H.M."/>
            <person name="Niznik H.B."/>
        </authorList>
    </citation>
    <scope>NUCLEOTIDE SEQUENCE [GENOMIC DNA]</scope>
    <source>
        <tissue>Brain</tissue>
    </source>
</reference>
<reference key="2">
    <citation type="journal article" date="1991" name="Proc. Natl. Acad. Sci. U.S.A.">
        <title>Multiple human D5 dopamine receptor genes: a functional receptor and two pseudogenes.</title>
        <authorList>
            <person name="Grandy D.K."/>
            <person name="Zhang Y."/>
            <person name="Bouvier C."/>
            <person name="Zhou Q.-Y."/>
            <person name="Johnson R.A."/>
            <person name="Allen L."/>
            <person name="Buck K."/>
            <person name="Bunzow J.R."/>
            <person name="Salon J."/>
            <person name="Civelli O."/>
        </authorList>
    </citation>
    <scope>NUCLEOTIDE SEQUENCE [GENOMIC DNA]</scope>
</reference>
<reference key="3">
    <citation type="journal article" date="1991" name="J. Biol. Chem.">
        <title>Molecular cloning and characterization of a high affinity dopamine receptor (D1 beta) and its pseudogene.</title>
        <authorList>
            <person name="Weinshank R.L."/>
            <person name="Adham N."/>
            <person name="Macchi M."/>
            <person name="Olsen M.A."/>
            <person name="Branchek T.A."/>
            <person name="Hartig P.R."/>
        </authorList>
    </citation>
    <scope>NUCLEOTIDE SEQUENCE [GENOMIC DNA]</scope>
    <scope>FUNCTION</scope>
    <scope>TISSUE SPECIFICITY</scope>
    <source>
        <tissue>Spleen</tissue>
    </source>
</reference>
<reference key="4">
    <citation type="submission" date="2002-07" db="EMBL/GenBank/DDBJ databases">
        <title>cDNA clones of human proteins involved in signal transduction sequenced by the Guthrie cDNA resource center (www.cdna.org).</title>
        <authorList>
            <person name="Puhl H.L. III"/>
            <person name="Ikeda S.R."/>
            <person name="Aronstam R.S."/>
        </authorList>
    </citation>
    <scope>NUCLEOTIDE SEQUENCE [LARGE SCALE MRNA]</scope>
</reference>
<reference key="5">
    <citation type="journal article" date="2004" name="Nat. Genet.">
        <title>Complete sequencing and characterization of 21,243 full-length human cDNAs.</title>
        <authorList>
            <person name="Ota T."/>
            <person name="Suzuki Y."/>
            <person name="Nishikawa T."/>
            <person name="Otsuki T."/>
            <person name="Sugiyama T."/>
            <person name="Irie R."/>
            <person name="Wakamatsu A."/>
            <person name="Hayashi K."/>
            <person name="Sato H."/>
            <person name="Nagai K."/>
            <person name="Kimura K."/>
            <person name="Makita H."/>
            <person name="Sekine M."/>
            <person name="Obayashi M."/>
            <person name="Nishi T."/>
            <person name="Shibahara T."/>
            <person name="Tanaka T."/>
            <person name="Ishii S."/>
            <person name="Yamamoto J."/>
            <person name="Saito K."/>
            <person name="Kawai Y."/>
            <person name="Isono Y."/>
            <person name="Nakamura Y."/>
            <person name="Nagahari K."/>
            <person name="Murakami K."/>
            <person name="Yasuda T."/>
            <person name="Iwayanagi T."/>
            <person name="Wagatsuma M."/>
            <person name="Shiratori A."/>
            <person name="Sudo H."/>
            <person name="Hosoiri T."/>
            <person name="Kaku Y."/>
            <person name="Kodaira H."/>
            <person name="Kondo H."/>
            <person name="Sugawara M."/>
            <person name="Takahashi M."/>
            <person name="Kanda K."/>
            <person name="Yokoi T."/>
            <person name="Furuya T."/>
            <person name="Kikkawa E."/>
            <person name="Omura Y."/>
            <person name="Abe K."/>
            <person name="Kamihara K."/>
            <person name="Katsuta N."/>
            <person name="Sato K."/>
            <person name="Tanikawa M."/>
            <person name="Yamazaki M."/>
            <person name="Ninomiya K."/>
            <person name="Ishibashi T."/>
            <person name="Yamashita H."/>
            <person name="Murakawa K."/>
            <person name="Fujimori K."/>
            <person name="Tanai H."/>
            <person name="Kimata M."/>
            <person name="Watanabe M."/>
            <person name="Hiraoka S."/>
            <person name="Chiba Y."/>
            <person name="Ishida S."/>
            <person name="Ono Y."/>
            <person name="Takiguchi S."/>
            <person name="Watanabe S."/>
            <person name="Yosida M."/>
            <person name="Hotuta T."/>
            <person name="Kusano J."/>
            <person name="Kanehori K."/>
            <person name="Takahashi-Fujii A."/>
            <person name="Hara H."/>
            <person name="Tanase T.-O."/>
            <person name="Nomura Y."/>
            <person name="Togiya S."/>
            <person name="Komai F."/>
            <person name="Hara R."/>
            <person name="Takeuchi K."/>
            <person name="Arita M."/>
            <person name="Imose N."/>
            <person name="Musashino K."/>
            <person name="Yuuki H."/>
            <person name="Oshima A."/>
            <person name="Sasaki N."/>
            <person name="Aotsuka S."/>
            <person name="Yoshikawa Y."/>
            <person name="Matsunawa H."/>
            <person name="Ichihara T."/>
            <person name="Shiohata N."/>
            <person name="Sano S."/>
            <person name="Moriya S."/>
            <person name="Momiyama H."/>
            <person name="Satoh N."/>
            <person name="Takami S."/>
            <person name="Terashima Y."/>
            <person name="Suzuki O."/>
            <person name="Nakagawa S."/>
            <person name="Senoh A."/>
            <person name="Mizoguchi H."/>
            <person name="Goto Y."/>
            <person name="Shimizu F."/>
            <person name="Wakebe H."/>
            <person name="Hishigaki H."/>
            <person name="Watanabe T."/>
            <person name="Sugiyama A."/>
            <person name="Takemoto M."/>
            <person name="Kawakami B."/>
            <person name="Yamazaki M."/>
            <person name="Watanabe K."/>
            <person name="Kumagai A."/>
            <person name="Itakura S."/>
            <person name="Fukuzumi Y."/>
            <person name="Fujimori Y."/>
            <person name="Komiyama M."/>
            <person name="Tashiro H."/>
            <person name="Tanigami A."/>
            <person name="Fujiwara T."/>
            <person name="Ono T."/>
            <person name="Yamada K."/>
            <person name="Fujii Y."/>
            <person name="Ozaki K."/>
            <person name="Hirao M."/>
            <person name="Ohmori Y."/>
            <person name="Kawabata A."/>
            <person name="Hikiji T."/>
            <person name="Kobatake N."/>
            <person name="Inagaki H."/>
            <person name="Ikema Y."/>
            <person name="Okamoto S."/>
            <person name="Okitani R."/>
            <person name="Kawakami T."/>
            <person name="Noguchi S."/>
            <person name="Itoh T."/>
            <person name="Shigeta K."/>
            <person name="Senba T."/>
            <person name="Matsumura K."/>
            <person name="Nakajima Y."/>
            <person name="Mizuno T."/>
            <person name="Morinaga M."/>
            <person name="Sasaki M."/>
            <person name="Togashi T."/>
            <person name="Oyama M."/>
            <person name="Hata H."/>
            <person name="Watanabe M."/>
            <person name="Komatsu T."/>
            <person name="Mizushima-Sugano J."/>
            <person name="Satoh T."/>
            <person name="Shirai Y."/>
            <person name="Takahashi Y."/>
            <person name="Nakagawa K."/>
            <person name="Okumura K."/>
            <person name="Nagase T."/>
            <person name="Nomura N."/>
            <person name="Kikuchi H."/>
            <person name="Masuho Y."/>
            <person name="Yamashita R."/>
            <person name="Nakai K."/>
            <person name="Yada T."/>
            <person name="Nakamura Y."/>
            <person name="Ohara O."/>
            <person name="Isogai T."/>
            <person name="Sugano S."/>
        </authorList>
    </citation>
    <scope>NUCLEOTIDE SEQUENCE [LARGE SCALE MRNA]</scope>
    <source>
        <tissue>Amygdala</tissue>
    </source>
</reference>
<reference key="6">
    <citation type="submission" date="2005-07" db="EMBL/GenBank/DDBJ databases">
        <authorList>
            <person name="Mural R.J."/>
            <person name="Istrail S."/>
            <person name="Sutton G.G."/>
            <person name="Florea L."/>
            <person name="Halpern A.L."/>
            <person name="Mobarry C.M."/>
            <person name="Lippert R."/>
            <person name="Walenz B."/>
            <person name="Shatkay H."/>
            <person name="Dew I."/>
            <person name="Miller J.R."/>
            <person name="Flanigan M.J."/>
            <person name="Edwards N.J."/>
            <person name="Bolanos R."/>
            <person name="Fasulo D."/>
            <person name="Halldorsson B.V."/>
            <person name="Hannenhalli S."/>
            <person name="Turner R."/>
            <person name="Yooseph S."/>
            <person name="Lu F."/>
            <person name="Nusskern D.R."/>
            <person name="Shue B.C."/>
            <person name="Zheng X.H."/>
            <person name="Zhong F."/>
            <person name="Delcher A.L."/>
            <person name="Huson D.H."/>
            <person name="Kravitz S.A."/>
            <person name="Mouchard L."/>
            <person name="Reinert K."/>
            <person name="Remington K.A."/>
            <person name="Clark A.G."/>
            <person name="Waterman M.S."/>
            <person name="Eichler E.E."/>
            <person name="Adams M.D."/>
            <person name="Hunkapiller M.W."/>
            <person name="Myers E.W."/>
            <person name="Venter J.C."/>
        </authorList>
    </citation>
    <scope>NUCLEOTIDE SEQUENCE [LARGE SCALE GENOMIC DNA]</scope>
</reference>
<reference key="7">
    <citation type="journal article" date="2004" name="Genome Res.">
        <title>The status, quality, and expansion of the NIH full-length cDNA project: the Mammalian Gene Collection (MGC).</title>
        <authorList>
            <consortium name="The MGC Project Team"/>
        </authorList>
    </citation>
    <scope>NUCLEOTIDE SEQUENCE [LARGE SCALE MRNA]</scope>
    <source>
        <tissue>Ovary</tissue>
    </source>
</reference>
<reference key="8">
    <citation type="journal article" date="1999" name="Mol. Pharmacol.">
        <title>N-linked glycosylation is required for plasma membrane localization of D5, but not D1, dopamine receptors in transfected mammalian cells.</title>
        <authorList>
            <person name="Karpa K.D."/>
            <person name="Lidow M.S."/>
            <person name="Pickering M.T."/>
            <person name="Levenson R."/>
            <person name="Bergson C."/>
        </authorList>
    </citation>
    <scope>GLYCOSYLATION AT ASN-7</scope>
    <scope>MUTAGENESIS OF ASN-7</scope>
</reference>
<reference key="9">
    <citation type="journal article" date="2002" name="Neurology">
        <title>A polymorphism in the dopamine receptor DRD5 is associated with blepharospasm.</title>
        <authorList>
            <person name="Misbahuddin A."/>
            <person name="Placzek M.R."/>
            <person name="Chaudhuri K.R."/>
            <person name="Wood N.W."/>
            <person name="Bhatia K.P."/>
            <person name="Warner T.T."/>
        </authorList>
    </citation>
    <scope>INVOLVEMENT IN BEB</scope>
</reference>
<reference key="10">
    <citation type="journal article" date="1995" name="Hum. Mol. Genet.">
        <title>The D5 dopamine receptor gene in schizophrenia: identification of a nonsense change and multiple missense changes but lack of association with disease.</title>
        <authorList>
            <person name="Sobell J.L."/>
            <person name="Lind T.J."/>
            <person name="Sigurdson D.C."/>
            <person name="Zald D.H."/>
            <person name="Snitz B.E."/>
            <person name="Grove W.M."/>
            <person name="Heston L.L."/>
            <person name="Sommer S.S."/>
        </authorList>
    </citation>
    <scope>VARIANTS VAL-269; GLN-330; ASP-351 AND CYS-453</scope>
</reference>
<reference key="11">
    <citation type="journal article" date="1999" name="Nat. Genet.">
        <title>Characterization of single-nucleotide polymorphisms in coding regions of human genes.</title>
        <authorList>
            <person name="Cargill M."/>
            <person name="Altshuler D."/>
            <person name="Ireland J."/>
            <person name="Sklar P."/>
            <person name="Ardlie K."/>
            <person name="Patil N."/>
            <person name="Shaw N."/>
            <person name="Lane C.R."/>
            <person name="Lim E.P."/>
            <person name="Kalyanaraman N."/>
            <person name="Nemesh J."/>
            <person name="Ziaugra L."/>
            <person name="Friedland L."/>
            <person name="Rolfe A."/>
            <person name="Warrington J."/>
            <person name="Lipshutz R."/>
            <person name="Daley G.Q."/>
            <person name="Lander E.S."/>
        </authorList>
    </citation>
    <scope>VARIANT ARG-88</scope>
</reference>
<reference key="12">
    <citation type="journal article" date="1999" name="Nat. Genet.">
        <authorList>
            <person name="Cargill M."/>
            <person name="Altshuler D."/>
            <person name="Ireland J."/>
            <person name="Sklar P."/>
            <person name="Ardlie K."/>
            <person name="Patil N."/>
            <person name="Shaw N."/>
            <person name="Lane C.R."/>
            <person name="Lim E.P."/>
            <person name="Kalyanaraman N."/>
            <person name="Nemesh J."/>
            <person name="Ziaugra L."/>
            <person name="Friedland L."/>
            <person name="Rolfe A."/>
            <person name="Warrington J."/>
            <person name="Lipshutz R."/>
            <person name="Daley G.Q."/>
            <person name="Lander E.S."/>
        </authorList>
    </citation>
    <scope>ERRATUM OF PUBMED:10391209</scope>
</reference>
<keyword id="KW-0002">3D-structure</keyword>
<keyword id="KW-1003">Cell membrane</keyword>
<keyword id="KW-1015">Disulfide bond</keyword>
<keyword id="KW-1023">Dystonia</keyword>
<keyword id="KW-0297">G-protein coupled receptor</keyword>
<keyword id="KW-0325">Glycoprotein</keyword>
<keyword id="KW-0449">Lipoprotein</keyword>
<keyword id="KW-0472">Membrane</keyword>
<keyword id="KW-0564">Palmitate</keyword>
<keyword id="KW-0675">Receptor</keyword>
<keyword id="KW-1185">Reference proteome</keyword>
<keyword id="KW-0807">Transducer</keyword>
<keyword id="KW-0812">Transmembrane</keyword>
<keyword id="KW-1133">Transmembrane helix</keyword>
<accession>P21918</accession>
<accession>B2R9S3</accession>
<accession>Q8NEQ8</accession>